<evidence type="ECO:0000255" key="1">
    <source>
        <dbReference type="HAMAP-Rule" id="MF_00294"/>
    </source>
</evidence>
<proteinExistence type="inferred from homology"/>
<sequence length="49" mass="5886">MRVNITLACTECGDRNYISKKNKRNNAERIELKKYCKRDKKSTLHRETK</sequence>
<gene>
    <name evidence="1" type="primary">rpmG1</name>
    <name type="ordered locus">BC_4263</name>
</gene>
<reference key="1">
    <citation type="journal article" date="2003" name="Nature">
        <title>Genome sequence of Bacillus cereus and comparative analysis with Bacillus anthracis.</title>
        <authorList>
            <person name="Ivanova N."/>
            <person name="Sorokin A."/>
            <person name="Anderson I."/>
            <person name="Galleron N."/>
            <person name="Candelon B."/>
            <person name="Kapatral V."/>
            <person name="Bhattacharyya A."/>
            <person name="Reznik G."/>
            <person name="Mikhailova N."/>
            <person name="Lapidus A."/>
            <person name="Chu L."/>
            <person name="Mazur M."/>
            <person name="Goltsman E."/>
            <person name="Larsen N."/>
            <person name="D'Souza M."/>
            <person name="Walunas T."/>
            <person name="Grechkin Y."/>
            <person name="Pusch G."/>
            <person name="Haselkorn R."/>
            <person name="Fonstein M."/>
            <person name="Ehrlich S.D."/>
            <person name="Overbeek R."/>
            <person name="Kyrpides N.C."/>
        </authorList>
    </citation>
    <scope>NUCLEOTIDE SEQUENCE [LARGE SCALE GENOMIC DNA]</scope>
    <source>
        <strain>ATCC 14579 / DSM 31 / CCUG 7414 / JCM 2152 / NBRC 15305 / NCIMB 9373 / NCTC 2599 / NRRL B-3711</strain>
    </source>
</reference>
<feature type="chain" id="PRO_0000356387" description="Large ribosomal subunit protein bL33A">
    <location>
        <begin position="1"/>
        <end position="49"/>
    </location>
</feature>
<keyword id="KW-1185">Reference proteome</keyword>
<keyword id="KW-0687">Ribonucleoprotein</keyword>
<keyword id="KW-0689">Ribosomal protein</keyword>
<organism>
    <name type="scientific">Bacillus cereus (strain ATCC 14579 / DSM 31 / CCUG 7414 / JCM 2152 / NBRC 15305 / NCIMB 9373 / NCTC 2599 / NRRL B-3711)</name>
    <dbReference type="NCBI Taxonomy" id="226900"/>
    <lineage>
        <taxon>Bacteria</taxon>
        <taxon>Bacillati</taxon>
        <taxon>Bacillota</taxon>
        <taxon>Bacilli</taxon>
        <taxon>Bacillales</taxon>
        <taxon>Bacillaceae</taxon>
        <taxon>Bacillus</taxon>
        <taxon>Bacillus cereus group</taxon>
    </lineage>
</organism>
<comment type="similarity">
    <text evidence="1">Belongs to the bacterial ribosomal protein bL33 family.</text>
</comment>
<name>RL331_BACCR</name>
<protein>
    <recommendedName>
        <fullName evidence="1">Large ribosomal subunit protein bL33A</fullName>
    </recommendedName>
    <alternativeName>
        <fullName evidence="1">50S ribosomal protein L33 1</fullName>
    </alternativeName>
</protein>
<dbReference type="EMBL" id="AE016877">
    <property type="protein sequence ID" value="AAP11178.1"/>
    <property type="molecule type" value="Genomic_DNA"/>
</dbReference>
<dbReference type="RefSeq" id="NP_833977.1">
    <property type="nucleotide sequence ID" value="NC_004722.1"/>
</dbReference>
<dbReference type="SMR" id="Q818J0"/>
<dbReference type="STRING" id="226900.BC_4263"/>
<dbReference type="KEGG" id="bce:BC4263"/>
<dbReference type="PATRIC" id="fig|226900.8.peg.4407"/>
<dbReference type="HOGENOM" id="CLU_190949_0_2_9"/>
<dbReference type="OrthoDB" id="197660at2"/>
<dbReference type="PRO" id="PR:Q818J0"/>
<dbReference type="Proteomes" id="UP000001417">
    <property type="component" value="Chromosome"/>
</dbReference>
<dbReference type="GO" id="GO:0005737">
    <property type="term" value="C:cytoplasm"/>
    <property type="evidence" value="ECO:0007669"/>
    <property type="project" value="UniProtKB-ARBA"/>
</dbReference>
<dbReference type="GO" id="GO:1990904">
    <property type="term" value="C:ribonucleoprotein complex"/>
    <property type="evidence" value="ECO:0007669"/>
    <property type="project" value="UniProtKB-KW"/>
</dbReference>
<dbReference type="GO" id="GO:0005840">
    <property type="term" value="C:ribosome"/>
    <property type="evidence" value="ECO:0007669"/>
    <property type="project" value="UniProtKB-KW"/>
</dbReference>
<dbReference type="GO" id="GO:0003735">
    <property type="term" value="F:structural constituent of ribosome"/>
    <property type="evidence" value="ECO:0007669"/>
    <property type="project" value="InterPro"/>
</dbReference>
<dbReference type="GO" id="GO:0006412">
    <property type="term" value="P:translation"/>
    <property type="evidence" value="ECO:0007669"/>
    <property type="project" value="UniProtKB-UniRule"/>
</dbReference>
<dbReference type="Gene3D" id="2.20.28.120">
    <property type="entry name" value="Ribosomal protein L33"/>
    <property type="match status" value="1"/>
</dbReference>
<dbReference type="HAMAP" id="MF_00294">
    <property type="entry name" value="Ribosomal_bL33"/>
    <property type="match status" value="1"/>
</dbReference>
<dbReference type="InterPro" id="IPR001705">
    <property type="entry name" value="Ribosomal_bL33"/>
</dbReference>
<dbReference type="InterPro" id="IPR018264">
    <property type="entry name" value="Ribosomal_bL33_CS"/>
</dbReference>
<dbReference type="InterPro" id="IPR038584">
    <property type="entry name" value="Ribosomal_bL33_sf"/>
</dbReference>
<dbReference type="InterPro" id="IPR011332">
    <property type="entry name" value="Ribosomal_zn-bd"/>
</dbReference>
<dbReference type="NCBIfam" id="NF001764">
    <property type="entry name" value="PRK00504.1"/>
    <property type="match status" value="1"/>
</dbReference>
<dbReference type="NCBIfam" id="NF001860">
    <property type="entry name" value="PRK00595.1"/>
    <property type="match status" value="1"/>
</dbReference>
<dbReference type="NCBIfam" id="TIGR01023">
    <property type="entry name" value="rpmG_bact"/>
    <property type="match status" value="1"/>
</dbReference>
<dbReference type="PANTHER" id="PTHR43168">
    <property type="entry name" value="50S RIBOSOMAL PROTEIN L33, CHLOROPLASTIC"/>
    <property type="match status" value="1"/>
</dbReference>
<dbReference type="PANTHER" id="PTHR43168:SF2">
    <property type="entry name" value="LARGE RIBOSOMAL SUBUNIT PROTEIN BL33C"/>
    <property type="match status" value="1"/>
</dbReference>
<dbReference type="Pfam" id="PF00471">
    <property type="entry name" value="Ribosomal_L33"/>
    <property type="match status" value="1"/>
</dbReference>
<dbReference type="SUPFAM" id="SSF57829">
    <property type="entry name" value="Zn-binding ribosomal proteins"/>
    <property type="match status" value="1"/>
</dbReference>
<dbReference type="PROSITE" id="PS00582">
    <property type="entry name" value="RIBOSOMAL_L33"/>
    <property type="match status" value="1"/>
</dbReference>
<accession>Q818J0</accession>